<protein>
    <recommendedName>
        <fullName evidence="1">Nucleoid-associated protein VP2178</fullName>
    </recommendedName>
</protein>
<dbReference type="EMBL" id="BA000031">
    <property type="protein sequence ID" value="BAC60441.1"/>
    <property type="molecule type" value="Genomic_DNA"/>
</dbReference>
<dbReference type="RefSeq" id="NP_798557.1">
    <property type="nucleotide sequence ID" value="NC_004603.1"/>
</dbReference>
<dbReference type="RefSeq" id="WP_005460082.1">
    <property type="nucleotide sequence ID" value="NC_004603.1"/>
</dbReference>
<dbReference type="SMR" id="Q87MQ3"/>
<dbReference type="GeneID" id="1189691"/>
<dbReference type="KEGG" id="vpa:VP2178"/>
<dbReference type="PATRIC" id="fig|223926.6.peg.2082"/>
<dbReference type="eggNOG" id="COG0718">
    <property type="taxonomic scope" value="Bacteria"/>
</dbReference>
<dbReference type="HOGENOM" id="CLU_140930_0_0_6"/>
<dbReference type="Proteomes" id="UP000002493">
    <property type="component" value="Chromosome 1"/>
</dbReference>
<dbReference type="GO" id="GO:0043590">
    <property type="term" value="C:bacterial nucleoid"/>
    <property type="evidence" value="ECO:0007669"/>
    <property type="project" value="UniProtKB-UniRule"/>
</dbReference>
<dbReference type="GO" id="GO:0005829">
    <property type="term" value="C:cytosol"/>
    <property type="evidence" value="ECO:0007669"/>
    <property type="project" value="TreeGrafter"/>
</dbReference>
<dbReference type="GO" id="GO:0003677">
    <property type="term" value="F:DNA binding"/>
    <property type="evidence" value="ECO:0007669"/>
    <property type="project" value="UniProtKB-UniRule"/>
</dbReference>
<dbReference type="FunFam" id="3.30.1310.10:FF:000001">
    <property type="entry name" value="Nucleoid-associated protein YbaB"/>
    <property type="match status" value="1"/>
</dbReference>
<dbReference type="Gene3D" id="3.30.1310.10">
    <property type="entry name" value="Nucleoid-associated protein YbaB-like domain"/>
    <property type="match status" value="1"/>
</dbReference>
<dbReference type="HAMAP" id="MF_00274">
    <property type="entry name" value="DNA_YbaB_EbfC"/>
    <property type="match status" value="1"/>
</dbReference>
<dbReference type="InterPro" id="IPR036894">
    <property type="entry name" value="YbaB-like_sf"/>
</dbReference>
<dbReference type="InterPro" id="IPR004401">
    <property type="entry name" value="YbaB/EbfC"/>
</dbReference>
<dbReference type="NCBIfam" id="TIGR00103">
    <property type="entry name" value="DNA_YbaB_EbfC"/>
    <property type="match status" value="1"/>
</dbReference>
<dbReference type="PANTHER" id="PTHR33449">
    <property type="entry name" value="NUCLEOID-ASSOCIATED PROTEIN YBAB"/>
    <property type="match status" value="1"/>
</dbReference>
<dbReference type="PANTHER" id="PTHR33449:SF1">
    <property type="entry name" value="NUCLEOID-ASSOCIATED PROTEIN YBAB"/>
    <property type="match status" value="1"/>
</dbReference>
<dbReference type="Pfam" id="PF02575">
    <property type="entry name" value="YbaB_DNA_bd"/>
    <property type="match status" value="1"/>
</dbReference>
<dbReference type="PIRSF" id="PIRSF004555">
    <property type="entry name" value="UCP004555"/>
    <property type="match status" value="1"/>
</dbReference>
<dbReference type="SUPFAM" id="SSF82607">
    <property type="entry name" value="YbaB-like"/>
    <property type="match status" value="1"/>
</dbReference>
<proteinExistence type="inferred from homology"/>
<reference key="1">
    <citation type="journal article" date="2003" name="Lancet">
        <title>Genome sequence of Vibrio parahaemolyticus: a pathogenic mechanism distinct from that of V. cholerae.</title>
        <authorList>
            <person name="Makino K."/>
            <person name="Oshima K."/>
            <person name="Kurokawa K."/>
            <person name="Yokoyama K."/>
            <person name="Uda T."/>
            <person name="Tagomori K."/>
            <person name="Iijima Y."/>
            <person name="Najima M."/>
            <person name="Nakano M."/>
            <person name="Yamashita A."/>
            <person name="Kubota Y."/>
            <person name="Kimura S."/>
            <person name="Yasunaga T."/>
            <person name="Honda T."/>
            <person name="Shinagawa H."/>
            <person name="Hattori M."/>
            <person name="Iida T."/>
        </authorList>
    </citation>
    <scope>NUCLEOTIDE SEQUENCE [LARGE SCALE GENOMIC DNA]</scope>
    <source>
        <strain>RIMD 2210633</strain>
    </source>
</reference>
<name>Y2178_VIBPA</name>
<organism>
    <name type="scientific">Vibrio parahaemolyticus serotype O3:K6 (strain RIMD 2210633)</name>
    <dbReference type="NCBI Taxonomy" id="223926"/>
    <lineage>
        <taxon>Bacteria</taxon>
        <taxon>Pseudomonadati</taxon>
        <taxon>Pseudomonadota</taxon>
        <taxon>Gammaproteobacteria</taxon>
        <taxon>Vibrionales</taxon>
        <taxon>Vibrionaceae</taxon>
        <taxon>Vibrio</taxon>
    </lineage>
</organism>
<accession>Q87MQ3</accession>
<gene>
    <name type="ordered locus">VP2178</name>
</gene>
<sequence length="109" mass="12023">MFGKGGMGNLMKQAQQMQERMQKLQEEIANMEVTGESGAGLVKVTITGSHSVRRVDIDESLMEDDKEMLEDLIAAAFNDAARRVEETQKEKMASVTGGMQLPPGMKMPF</sequence>
<evidence type="ECO:0000255" key="1">
    <source>
        <dbReference type="HAMAP-Rule" id="MF_00274"/>
    </source>
</evidence>
<evidence type="ECO:0000256" key="2">
    <source>
        <dbReference type="SAM" id="MobiDB-lite"/>
    </source>
</evidence>
<comment type="function">
    <text evidence="1">Binds to DNA and alters its conformation. May be involved in regulation of gene expression, nucleoid organization and DNA protection.</text>
</comment>
<comment type="subunit">
    <text evidence="1">Homodimer.</text>
</comment>
<comment type="subcellular location">
    <subcellularLocation>
        <location evidence="1">Cytoplasm</location>
        <location evidence="1">Nucleoid</location>
    </subcellularLocation>
</comment>
<comment type="similarity">
    <text evidence="1">Belongs to the YbaB/EbfC family.</text>
</comment>
<keyword id="KW-0963">Cytoplasm</keyword>
<keyword id="KW-0238">DNA-binding</keyword>
<feature type="chain" id="PRO_0000170462" description="Nucleoid-associated protein VP2178">
    <location>
        <begin position="1"/>
        <end position="109"/>
    </location>
</feature>
<feature type="region of interest" description="Disordered" evidence="2">
    <location>
        <begin position="1"/>
        <end position="22"/>
    </location>
</feature>
<feature type="region of interest" description="Disordered" evidence="2">
    <location>
        <begin position="88"/>
        <end position="109"/>
    </location>
</feature>